<keyword id="KW-0012">Acyltransferase</keyword>
<keyword id="KW-0441">Lipid A biosynthesis</keyword>
<keyword id="KW-0444">Lipid biosynthesis</keyword>
<keyword id="KW-0443">Lipid metabolism</keyword>
<keyword id="KW-1185">Reference proteome</keyword>
<keyword id="KW-0677">Repeat</keyword>
<keyword id="KW-0808">Transferase</keyword>
<sequence>MKLGELAAHLGCPVEGNPDVEIRGLASIQQAGPGELSFIESEKYARFIKLTRAEALILDWRTPVSKVPCIRSEQPRLTFAHALELFYQPRRPAPGIHPTAILGANVQLGENVHLGAYVVIGDDVTIGPEAVIYPNCTIYNDVRIGVRTVVHANCVLHERTKIGDECIVQSGAVVGGEGFGFVPTPEGTWHKMPQSGYVRVEDQVEIGSNAAIDRPSVGFTHIGRGTKIDNLVMVGHGCEIGEHCLLVGQVGLAGGVKLGRNVVLAGQVGVAGHAAIGDRTVVSAQSGIPSDVEPGTVVSGSPALPHALWLRTSALIRRLPELFQNLRDLQRKVALLQQRLDSGHH</sequence>
<dbReference type="EC" id="2.3.1.191" evidence="1"/>
<dbReference type="EMBL" id="BA000045">
    <property type="protein sequence ID" value="BAC90654.1"/>
    <property type="molecule type" value="Genomic_DNA"/>
</dbReference>
<dbReference type="RefSeq" id="NP_925659.1">
    <property type="nucleotide sequence ID" value="NC_005125.1"/>
</dbReference>
<dbReference type="RefSeq" id="WP_011142707.1">
    <property type="nucleotide sequence ID" value="NC_005125.1"/>
</dbReference>
<dbReference type="SMR" id="Q7NH24"/>
<dbReference type="STRING" id="251221.gene:10760215"/>
<dbReference type="EnsemblBacteria" id="BAC90654">
    <property type="protein sequence ID" value="BAC90654"/>
    <property type="gene ID" value="BAC90654"/>
</dbReference>
<dbReference type="KEGG" id="gvi:glr2713"/>
<dbReference type="PATRIC" id="fig|251221.4.peg.2740"/>
<dbReference type="eggNOG" id="COG1044">
    <property type="taxonomic scope" value="Bacteria"/>
</dbReference>
<dbReference type="HOGENOM" id="CLU_049865_0_0_3"/>
<dbReference type="InParanoid" id="Q7NH24"/>
<dbReference type="OrthoDB" id="9784739at2"/>
<dbReference type="PhylomeDB" id="Q7NH24"/>
<dbReference type="UniPathway" id="UPA00973"/>
<dbReference type="Proteomes" id="UP000000557">
    <property type="component" value="Chromosome"/>
</dbReference>
<dbReference type="GO" id="GO:0031470">
    <property type="term" value="C:carboxysome"/>
    <property type="evidence" value="ECO:0007669"/>
    <property type="project" value="UniProtKB-ARBA"/>
</dbReference>
<dbReference type="GO" id="GO:0016020">
    <property type="term" value="C:membrane"/>
    <property type="evidence" value="ECO:0007669"/>
    <property type="project" value="GOC"/>
</dbReference>
<dbReference type="GO" id="GO:0016410">
    <property type="term" value="F:N-acyltransferase activity"/>
    <property type="evidence" value="ECO:0007669"/>
    <property type="project" value="InterPro"/>
</dbReference>
<dbReference type="GO" id="GO:0043886">
    <property type="term" value="F:structural constituent of carboxysome shell"/>
    <property type="evidence" value="ECO:0007669"/>
    <property type="project" value="UniProtKB-ARBA"/>
</dbReference>
<dbReference type="GO" id="GO:0009245">
    <property type="term" value="P:lipid A biosynthetic process"/>
    <property type="evidence" value="ECO:0007669"/>
    <property type="project" value="UniProtKB-UniRule"/>
</dbReference>
<dbReference type="CDD" id="cd03352">
    <property type="entry name" value="LbH_LpxD"/>
    <property type="match status" value="1"/>
</dbReference>
<dbReference type="Gene3D" id="2.160.10.10">
    <property type="entry name" value="Hexapeptide repeat proteins"/>
    <property type="match status" value="1"/>
</dbReference>
<dbReference type="Gene3D" id="3.40.1390.10">
    <property type="entry name" value="MurE/MurF, N-terminal domain"/>
    <property type="match status" value="1"/>
</dbReference>
<dbReference type="HAMAP" id="MF_00523">
    <property type="entry name" value="LpxD"/>
    <property type="match status" value="1"/>
</dbReference>
<dbReference type="InterPro" id="IPR001451">
    <property type="entry name" value="Hexapep"/>
</dbReference>
<dbReference type="InterPro" id="IPR007691">
    <property type="entry name" value="LpxD"/>
</dbReference>
<dbReference type="InterPro" id="IPR011004">
    <property type="entry name" value="Trimer_LpxA-like_sf"/>
</dbReference>
<dbReference type="InterPro" id="IPR020573">
    <property type="entry name" value="UDP_GlcNAc_AcTrfase_non-rep"/>
</dbReference>
<dbReference type="NCBIfam" id="TIGR01853">
    <property type="entry name" value="lipid_A_lpxD"/>
    <property type="match status" value="1"/>
</dbReference>
<dbReference type="NCBIfam" id="NF002060">
    <property type="entry name" value="PRK00892.1"/>
    <property type="match status" value="1"/>
</dbReference>
<dbReference type="PANTHER" id="PTHR43378">
    <property type="entry name" value="UDP-3-O-ACYLGLUCOSAMINE N-ACYLTRANSFERASE"/>
    <property type="match status" value="1"/>
</dbReference>
<dbReference type="PANTHER" id="PTHR43378:SF2">
    <property type="entry name" value="UDP-3-O-ACYLGLUCOSAMINE N-ACYLTRANSFERASE 1, MITOCHONDRIAL-RELATED"/>
    <property type="match status" value="1"/>
</dbReference>
<dbReference type="Pfam" id="PF00132">
    <property type="entry name" value="Hexapep"/>
    <property type="match status" value="2"/>
</dbReference>
<dbReference type="Pfam" id="PF04613">
    <property type="entry name" value="LpxD"/>
    <property type="match status" value="1"/>
</dbReference>
<dbReference type="SUPFAM" id="SSF51161">
    <property type="entry name" value="Trimeric LpxA-like enzymes"/>
    <property type="match status" value="1"/>
</dbReference>
<name>LPXD3_GLOVI</name>
<evidence type="ECO:0000255" key="1">
    <source>
        <dbReference type="HAMAP-Rule" id="MF_00523"/>
    </source>
</evidence>
<gene>
    <name evidence="1" type="primary">lpxD3</name>
    <name type="ordered locus">glr2713</name>
</gene>
<feature type="chain" id="PRO_0000059675" description="UDP-3-O-acylglucosamine N-acyltransferase 3">
    <location>
        <begin position="1"/>
        <end position="345"/>
    </location>
</feature>
<feature type="active site" description="Proton acceptor" evidence="1">
    <location>
        <position position="236"/>
    </location>
</feature>
<organism>
    <name type="scientific">Gloeobacter violaceus (strain ATCC 29082 / PCC 7421)</name>
    <dbReference type="NCBI Taxonomy" id="251221"/>
    <lineage>
        <taxon>Bacteria</taxon>
        <taxon>Bacillati</taxon>
        <taxon>Cyanobacteriota</taxon>
        <taxon>Cyanophyceae</taxon>
        <taxon>Gloeobacterales</taxon>
        <taxon>Gloeobacteraceae</taxon>
        <taxon>Gloeobacter</taxon>
    </lineage>
</organism>
<comment type="function">
    <text evidence="1">Catalyzes the N-acylation of UDP-3-O-acylglucosamine using 3-hydroxyacyl-ACP as the acyl donor. Is involved in the biosynthesis of lipid A, a phosphorylated glycolipid that anchors the lipopolysaccharide to the outer membrane of the cell.</text>
</comment>
<comment type="catalytic activity">
    <reaction evidence="1">
        <text>a UDP-3-O-[(3R)-3-hydroxyacyl]-alpha-D-glucosamine + a (3R)-hydroxyacyl-[ACP] = a UDP-2-N,3-O-bis[(3R)-3-hydroxyacyl]-alpha-D-glucosamine + holo-[ACP] + H(+)</text>
        <dbReference type="Rhea" id="RHEA:53836"/>
        <dbReference type="Rhea" id="RHEA-COMP:9685"/>
        <dbReference type="Rhea" id="RHEA-COMP:9945"/>
        <dbReference type="ChEBI" id="CHEBI:15378"/>
        <dbReference type="ChEBI" id="CHEBI:64479"/>
        <dbReference type="ChEBI" id="CHEBI:78827"/>
        <dbReference type="ChEBI" id="CHEBI:137740"/>
        <dbReference type="ChEBI" id="CHEBI:137748"/>
        <dbReference type="EC" id="2.3.1.191"/>
    </reaction>
</comment>
<comment type="pathway">
    <text evidence="1">Bacterial outer membrane biogenesis; LPS lipid A biosynthesis.</text>
</comment>
<comment type="subunit">
    <text evidence="1">Homotrimer.</text>
</comment>
<comment type="similarity">
    <text evidence="1">Belongs to the transferase hexapeptide repeat family. LpxD subfamily.</text>
</comment>
<proteinExistence type="inferred from homology"/>
<reference key="1">
    <citation type="journal article" date="2003" name="DNA Res.">
        <title>Complete genome structure of Gloeobacter violaceus PCC 7421, a cyanobacterium that lacks thylakoids.</title>
        <authorList>
            <person name="Nakamura Y."/>
            <person name="Kaneko T."/>
            <person name="Sato S."/>
            <person name="Mimuro M."/>
            <person name="Miyashita H."/>
            <person name="Tsuchiya T."/>
            <person name="Sasamoto S."/>
            <person name="Watanabe A."/>
            <person name="Kawashima K."/>
            <person name="Kishida Y."/>
            <person name="Kiyokawa C."/>
            <person name="Kohara M."/>
            <person name="Matsumoto M."/>
            <person name="Matsuno A."/>
            <person name="Nakazaki N."/>
            <person name="Shimpo S."/>
            <person name="Takeuchi C."/>
            <person name="Yamada M."/>
            <person name="Tabata S."/>
        </authorList>
    </citation>
    <scope>NUCLEOTIDE SEQUENCE [LARGE SCALE GENOMIC DNA]</scope>
    <source>
        <strain>ATCC 29082 / PCC 7421</strain>
    </source>
</reference>
<protein>
    <recommendedName>
        <fullName evidence="1">UDP-3-O-acylglucosamine N-acyltransferase 3</fullName>
        <ecNumber evidence="1">2.3.1.191</ecNumber>
    </recommendedName>
</protein>
<accession>Q7NH24</accession>